<dbReference type="EC" id="2.3.1.31" evidence="1"/>
<dbReference type="EMBL" id="AE001437">
    <property type="protein sequence ID" value="AAK79790.1"/>
    <property type="molecule type" value="Genomic_DNA"/>
</dbReference>
<dbReference type="PIR" id="C97125">
    <property type="entry name" value="C97125"/>
</dbReference>
<dbReference type="RefSeq" id="NP_348450.1">
    <property type="nucleotide sequence ID" value="NC_003030.1"/>
</dbReference>
<dbReference type="RefSeq" id="WP_010965131.1">
    <property type="nucleotide sequence ID" value="NC_003030.1"/>
</dbReference>
<dbReference type="SMR" id="Q97I29"/>
<dbReference type="STRING" id="272562.CA_C1825"/>
<dbReference type="DNASU" id="1118008"/>
<dbReference type="GeneID" id="44998319"/>
<dbReference type="KEGG" id="cac:CA_C1825"/>
<dbReference type="PATRIC" id="fig|272562.8.peg.2031"/>
<dbReference type="eggNOG" id="COG1897">
    <property type="taxonomic scope" value="Bacteria"/>
</dbReference>
<dbReference type="HOGENOM" id="CLU_057851_0_1_9"/>
<dbReference type="OrthoDB" id="9772423at2"/>
<dbReference type="UniPathway" id="UPA00051">
    <property type="reaction ID" value="UER00074"/>
</dbReference>
<dbReference type="Proteomes" id="UP000000814">
    <property type="component" value="Chromosome"/>
</dbReference>
<dbReference type="GO" id="GO:0005737">
    <property type="term" value="C:cytoplasm"/>
    <property type="evidence" value="ECO:0007669"/>
    <property type="project" value="UniProtKB-SubCell"/>
</dbReference>
<dbReference type="GO" id="GO:0004414">
    <property type="term" value="F:homoserine O-acetyltransferase activity"/>
    <property type="evidence" value="ECO:0007669"/>
    <property type="project" value="UniProtKB-EC"/>
</dbReference>
<dbReference type="GO" id="GO:0008899">
    <property type="term" value="F:homoserine O-succinyltransferase activity"/>
    <property type="evidence" value="ECO:0007669"/>
    <property type="project" value="UniProtKB-UniRule"/>
</dbReference>
<dbReference type="GO" id="GO:0019281">
    <property type="term" value="P:L-methionine biosynthetic process from homoserine via O-succinyl-L-homoserine and cystathionine"/>
    <property type="evidence" value="ECO:0007669"/>
    <property type="project" value="InterPro"/>
</dbReference>
<dbReference type="CDD" id="cd03131">
    <property type="entry name" value="GATase1_HTS"/>
    <property type="match status" value="1"/>
</dbReference>
<dbReference type="FunFam" id="3.40.50.880:FF:000004">
    <property type="entry name" value="Homoserine O-succinyltransferase"/>
    <property type="match status" value="1"/>
</dbReference>
<dbReference type="Gene3D" id="3.40.50.880">
    <property type="match status" value="1"/>
</dbReference>
<dbReference type="HAMAP" id="MF_00295">
    <property type="entry name" value="MetA_acyltransf"/>
    <property type="match status" value="1"/>
</dbReference>
<dbReference type="InterPro" id="IPR029062">
    <property type="entry name" value="Class_I_gatase-like"/>
</dbReference>
<dbReference type="InterPro" id="IPR005697">
    <property type="entry name" value="HST_MetA"/>
</dbReference>
<dbReference type="InterPro" id="IPR033752">
    <property type="entry name" value="MetA_family"/>
</dbReference>
<dbReference type="NCBIfam" id="TIGR01001">
    <property type="entry name" value="metA"/>
    <property type="match status" value="1"/>
</dbReference>
<dbReference type="PANTHER" id="PTHR20919">
    <property type="entry name" value="HOMOSERINE O-SUCCINYLTRANSFERASE"/>
    <property type="match status" value="1"/>
</dbReference>
<dbReference type="PANTHER" id="PTHR20919:SF0">
    <property type="entry name" value="HOMOSERINE O-SUCCINYLTRANSFERASE"/>
    <property type="match status" value="1"/>
</dbReference>
<dbReference type="Pfam" id="PF04204">
    <property type="entry name" value="HTS"/>
    <property type="match status" value="1"/>
</dbReference>
<dbReference type="PIRSF" id="PIRSF000450">
    <property type="entry name" value="H_ser_succinyltr"/>
    <property type="match status" value="1"/>
</dbReference>
<dbReference type="SUPFAM" id="SSF52317">
    <property type="entry name" value="Class I glutamine amidotransferase-like"/>
    <property type="match status" value="1"/>
</dbReference>
<comment type="function">
    <text evidence="1">Transfers an acetyl group from acetyl-CoA to L-homoserine, forming acetyl-L-homoserine.</text>
</comment>
<comment type="catalytic activity">
    <reaction evidence="1">
        <text>L-homoserine + acetyl-CoA = O-acetyl-L-homoserine + CoA</text>
        <dbReference type="Rhea" id="RHEA:13701"/>
        <dbReference type="ChEBI" id="CHEBI:57287"/>
        <dbReference type="ChEBI" id="CHEBI:57288"/>
        <dbReference type="ChEBI" id="CHEBI:57476"/>
        <dbReference type="ChEBI" id="CHEBI:57716"/>
        <dbReference type="EC" id="2.3.1.31"/>
    </reaction>
</comment>
<comment type="pathway">
    <text evidence="1">Amino-acid biosynthesis; L-methionine biosynthesis via de novo pathway; O-acetyl-L-homoserine from L-homoserine: step 1/1.</text>
</comment>
<comment type="subcellular location">
    <subcellularLocation>
        <location evidence="1">Cytoplasm</location>
    </subcellularLocation>
</comment>
<comment type="similarity">
    <text evidence="1">Belongs to the MetA family.</text>
</comment>
<proteinExistence type="inferred from homology"/>
<feature type="chain" id="PRO_0000199746" description="Homoserine O-acetyltransferase">
    <location>
        <begin position="1"/>
        <end position="301"/>
    </location>
</feature>
<feature type="active site" description="Acyl-thioester intermediate" evidence="1">
    <location>
        <position position="142"/>
    </location>
</feature>
<feature type="active site" description="Proton acceptor" evidence="1">
    <location>
        <position position="235"/>
    </location>
</feature>
<feature type="active site" evidence="1">
    <location>
        <position position="237"/>
    </location>
</feature>
<feature type="binding site" evidence="1">
    <location>
        <position position="163"/>
    </location>
    <ligand>
        <name>substrate</name>
    </ligand>
</feature>
<feature type="binding site" evidence="1">
    <location>
        <position position="192"/>
    </location>
    <ligand>
        <name>substrate</name>
    </ligand>
</feature>
<feature type="binding site" evidence="1">
    <location>
        <position position="249"/>
    </location>
    <ligand>
        <name>substrate</name>
    </ligand>
</feature>
<feature type="site" description="Important for acyl-CoA specificity" evidence="1">
    <location>
        <position position="111"/>
    </location>
</feature>
<feature type="site" description="Important for substrate specificity" evidence="1">
    <location>
        <position position="192"/>
    </location>
</feature>
<protein>
    <recommendedName>
        <fullName evidence="1">Homoserine O-acetyltransferase</fullName>
        <shortName evidence="1">HAT</shortName>
        <ecNumber evidence="1">2.3.1.31</ecNumber>
    </recommendedName>
    <alternativeName>
        <fullName evidence="1">Homoserine transacetylase</fullName>
        <shortName evidence="1">HTA</shortName>
    </alternativeName>
</protein>
<reference key="1">
    <citation type="journal article" date="2001" name="J. Bacteriol.">
        <title>Genome sequence and comparative analysis of the solvent-producing bacterium Clostridium acetobutylicum.</title>
        <authorList>
            <person name="Noelling J."/>
            <person name="Breton G."/>
            <person name="Omelchenko M.V."/>
            <person name="Makarova K.S."/>
            <person name="Zeng Q."/>
            <person name="Gibson R."/>
            <person name="Lee H.M."/>
            <person name="Dubois J."/>
            <person name="Qiu D."/>
            <person name="Hitti J."/>
            <person name="Wolf Y.I."/>
            <person name="Tatusov R.L."/>
            <person name="Sabathe F."/>
            <person name="Doucette-Stamm L.A."/>
            <person name="Soucaille P."/>
            <person name="Daly M.J."/>
            <person name="Bennett G.N."/>
            <person name="Koonin E.V."/>
            <person name="Smith D.R."/>
        </authorList>
    </citation>
    <scope>NUCLEOTIDE SEQUENCE [LARGE SCALE GENOMIC DNA]</scope>
    <source>
        <strain>ATCC 824 / DSM 792 / JCM 1419 / IAM 19013 / LMG 5710 / NBRC 13948 / NRRL B-527 / VKM B-1787 / 2291 / W</strain>
    </source>
</reference>
<accession>Q97I29</accession>
<organism>
    <name type="scientific">Clostridium acetobutylicum (strain ATCC 824 / DSM 792 / JCM 1419 / IAM 19013 / LMG 5710 / NBRC 13948 / NRRL B-527 / VKM B-1787 / 2291 / W)</name>
    <dbReference type="NCBI Taxonomy" id="272562"/>
    <lineage>
        <taxon>Bacteria</taxon>
        <taxon>Bacillati</taxon>
        <taxon>Bacillota</taxon>
        <taxon>Clostridia</taxon>
        <taxon>Eubacteriales</taxon>
        <taxon>Clostridiaceae</taxon>
        <taxon>Clostridium</taxon>
    </lineage>
</organism>
<sequence>MPIKIPDNLPAAKTLNEENIFFMDEDRAYHQDIRPLNIVIVNLMPTKIVTETQILRLIGNSPLQVNPTFIHTQTHKSQNTSKEHLIKFYETFEEIKNNKFDGMIVTGAPVETLSFENVDYWEELCRIFDWSVTNVTSTIHICWGAQAGLYHHYGIPKYELHEKLFGVFKHNLTERNIKLTRGFDDEFYAPHSRHTYVKREDIKKNPSLKILAESDEAGAYIVASENGKNIFVMGHAEYDGDTLNLEYIRDKNQGMNIKIPKNYFKDNDPEKGPMVTWRGHANLLFSNWLNYYVYQETPFEL</sequence>
<evidence type="ECO:0000255" key="1">
    <source>
        <dbReference type="HAMAP-Rule" id="MF_00295"/>
    </source>
</evidence>
<name>METAA_CLOAB</name>
<gene>
    <name evidence="1" type="primary">metAA</name>
    <name type="synonym">metA</name>
    <name type="ordered locus">CA_C1825</name>
</gene>
<keyword id="KW-0012">Acyltransferase</keyword>
<keyword id="KW-0028">Amino-acid biosynthesis</keyword>
<keyword id="KW-0963">Cytoplasm</keyword>
<keyword id="KW-0486">Methionine biosynthesis</keyword>
<keyword id="KW-1185">Reference proteome</keyword>
<keyword id="KW-0808">Transferase</keyword>